<proteinExistence type="evidence at protein level"/>
<feature type="chain" id="PRO_1000056213" description="Bifunctional protein GlmU">
    <location>
        <begin position="1"/>
        <end position="456"/>
    </location>
</feature>
<feature type="region of interest" description="Pyrophosphorylase" evidence="1">
    <location>
        <begin position="1"/>
        <end position="229"/>
    </location>
</feature>
<feature type="region of interest" description="Linker" evidence="1">
    <location>
        <begin position="230"/>
        <end position="250"/>
    </location>
</feature>
<feature type="region of interest" description="N-acetyltransferase" evidence="1">
    <location>
        <begin position="251"/>
        <end position="456"/>
    </location>
</feature>
<feature type="active site" description="Proton acceptor" evidence="1">
    <location>
        <position position="363"/>
    </location>
</feature>
<feature type="binding site" evidence="1">
    <location>
        <begin position="11"/>
        <end position="14"/>
    </location>
    <ligand>
        <name>UDP-N-acetyl-alpha-D-glucosamine</name>
        <dbReference type="ChEBI" id="CHEBI:57705"/>
    </ligand>
</feature>
<feature type="binding site" evidence="1">
    <location>
        <position position="25"/>
    </location>
    <ligand>
        <name>UDP-N-acetyl-alpha-D-glucosamine</name>
        <dbReference type="ChEBI" id="CHEBI:57705"/>
    </ligand>
</feature>
<feature type="binding site" evidence="1">
    <location>
        <position position="76"/>
    </location>
    <ligand>
        <name>UDP-N-acetyl-alpha-D-glucosamine</name>
        <dbReference type="ChEBI" id="CHEBI:57705"/>
    </ligand>
</feature>
<feature type="binding site" evidence="1">
    <location>
        <begin position="81"/>
        <end position="82"/>
    </location>
    <ligand>
        <name>UDP-N-acetyl-alpha-D-glucosamine</name>
        <dbReference type="ChEBI" id="CHEBI:57705"/>
    </ligand>
</feature>
<feature type="binding site" evidence="1">
    <location>
        <begin position="103"/>
        <end position="105"/>
    </location>
    <ligand>
        <name>UDP-N-acetyl-alpha-D-glucosamine</name>
        <dbReference type="ChEBI" id="CHEBI:57705"/>
    </ligand>
</feature>
<feature type="binding site" evidence="1">
    <location>
        <position position="105"/>
    </location>
    <ligand>
        <name>Mg(2+)</name>
        <dbReference type="ChEBI" id="CHEBI:18420"/>
    </ligand>
</feature>
<feature type="binding site" evidence="1">
    <location>
        <position position="140"/>
    </location>
    <ligand>
        <name>UDP-N-acetyl-alpha-D-glucosamine</name>
        <dbReference type="ChEBI" id="CHEBI:57705"/>
    </ligand>
</feature>
<feature type="binding site" evidence="1">
    <location>
        <position position="154"/>
    </location>
    <ligand>
        <name>UDP-N-acetyl-alpha-D-glucosamine</name>
        <dbReference type="ChEBI" id="CHEBI:57705"/>
    </ligand>
</feature>
<feature type="binding site" evidence="1">
    <location>
        <position position="169"/>
    </location>
    <ligand>
        <name>UDP-N-acetyl-alpha-D-glucosamine</name>
        <dbReference type="ChEBI" id="CHEBI:57705"/>
    </ligand>
</feature>
<feature type="binding site" evidence="1">
    <location>
        <position position="227"/>
    </location>
    <ligand>
        <name>Mg(2+)</name>
        <dbReference type="ChEBI" id="CHEBI:18420"/>
    </ligand>
</feature>
<feature type="binding site" evidence="1">
    <location>
        <position position="227"/>
    </location>
    <ligand>
        <name>UDP-N-acetyl-alpha-D-glucosamine</name>
        <dbReference type="ChEBI" id="CHEBI:57705"/>
    </ligand>
</feature>
<feature type="binding site" evidence="1">
    <location>
        <position position="333"/>
    </location>
    <ligand>
        <name>UDP-N-acetyl-alpha-D-glucosamine</name>
        <dbReference type="ChEBI" id="CHEBI:57705"/>
    </ligand>
</feature>
<feature type="binding site" evidence="1">
    <location>
        <position position="351"/>
    </location>
    <ligand>
        <name>UDP-N-acetyl-alpha-D-glucosamine</name>
        <dbReference type="ChEBI" id="CHEBI:57705"/>
    </ligand>
</feature>
<feature type="binding site" evidence="1">
    <location>
        <position position="366"/>
    </location>
    <ligand>
        <name>UDP-N-acetyl-alpha-D-glucosamine</name>
        <dbReference type="ChEBI" id="CHEBI:57705"/>
    </ligand>
</feature>
<feature type="binding site" evidence="1">
    <location>
        <position position="377"/>
    </location>
    <ligand>
        <name>UDP-N-acetyl-alpha-D-glucosamine</name>
        <dbReference type="ChEBI" id="CHEBI:57705"/>
    </ligand>
</feature>
<feature type="binding site" evidence="1">
    <location>
        <position position="380"/>
    </location>
    <ligand>
        <name>acetyl-CoA</name>
        <dbReference type="ChEBI" id="CHEBI:57288"/>
    </ligand>
</feature>
<feature type="binding site" evidence="1">
    <location>
        <begin position="386"/>
        <end position="387"/>
    </location>
    <ligand>
        <name>acetyl-CoA</name>
        <dbReference type="ChEBI" id="CHEBI:57288"/>
    </ligand>
</feature>
<feature type="binding site" evidence="1">
    <location>
        <position position="405"/>
    </location>
    <ligand>
        <name>acetyl-CoA</name>
        <dbReference type="ChEBI" id="CHEBI:57288"/>
    </ligand>
</feature>
<feature type="binding site" evidence="1">
    <location>
        <position position="423"/>
    </location>
    <ligand>
        <name>acetyl-CoA</name>
        <dbReference type="ChEBI" id="CHEBI:57288"/>
    </ligand>
</feature>
<feature type="binding site" evidence="1">
    <location>
        <position position="440"/>
    </location>
    <ligand>
        <name>acetyl-CoA</name>
        <dbReference type="ChEBI" id="CHEBI:57288"/>
    </ligand>
</feature>
<feature type="strand" evidence="2">
    <location>
        <begin position="6"/>
        <end position="11"/>
    </location>
</feature>
<feature type="helix" evidence="2">
    <location>
        <begin position="17"/>
        <end position="19"/>
    </location>
</feature>
<feature type="helix" evidence="2">
    <location>
        <begin position="25"/>
        <end position="27"/>
    </location>
</feature>
<feature type="strand" evidence="2">
    <location>
        <begin position="28"/>
        <end position="30"/>
    </location>
</feature>
<feature type="helix" evidence="2">
    <location>
        <begin position="35"/>
        <end position="46"/>
    </location>
</feature>
<feature type="strand" evidence="2">
    <location>
        <begin position="51"/>
        <end position="54"/>
    </location>
</feature>
<feature type="strand" evidence="2">
    <location>
        <begin position="56"/>
        <end position="58"/>
    </location>
</feature>
<feature type="helix" evidence="2">
    <location>
        <begin position="59"/>
        <end position="65"/>
    </location>
</feature>
<feature type="strand" evidence="2">
    <location>
        <begin position="72"/>
        <end position="74"/>
    </location>
</feature>
<feature type="strand" evidence="2">
    <location>
        <begin position="77"/>
        <end position="79"/>
    </location>
</feature>
<feature type="helix" evidence="2">
    <location>
        <begin position="82"/>
        <end position="88"/>
    </location>
</feature>
<feature type="helix" evidence="2">
    <location>
        <begin position="90"/>
        <end position="92"/>
    </location>
</feature>
<feature type="strand" evidence="2">
    <location>
        <begin position="97"/>
        <end position="103"/>
    </location>
</feature>
<feature type="helix" evidence="2">
    <location>
        <begin position="111"/>
        <end position="117"/>
    </location>
</feature>
<feature type="strand" evidence="2">
    <location>
        <begin position="123"/>
        <end position="125"/>
    </location>
</feature>
<feature type="strand" evidence="2">
    <location>
        <begin position="127"/>
        <end position="132"/>
    </location>
</feature>
<feature type="strand" evidence="2">
    <location>
        <begin position="141"/>
        <end position="147"/>
    </location>
</feature>
<feature type="strand" evidence="2">
    <location>
        <begin position="149"/>
        <end position="153"/>
    </location>
</feature>
<feature type="helix" evidence="2">
    <location>
        <begin position="162"/>
        <end position="164"/>
    </location>
</feature>
<feature type="strand" evidence="2">
    <location>
        <begin position="167"/>
        <end position="173"/>
    </location>
</feature>
<feature type="helix" evidence="2">
    <location>
        <begin position="177"/>
        <end position="184"/>
    </location>
</feature>
<feature type="helix" evidence="2">
    <location>
        <begin position="198"/>
        <end position="202"/>
    </location>
</feature>
<feature type="helix" evidence="2">
    <location>
        <begin position="203"/>
        <end position="206"/>
    </location>
</feature>
<feature type="turn" evidence="2">
    <location>
        <begin position="207"/>
        <end position="209"/>
    </location>
</feature>
<feature type="strand" evidence="2">
    <location>
        <begin position="213"/>
        <end position="215"/>
    </location>
</feature>
<feature type="helix" evidence="2">
    <location>
        <begin position="220"/>
        <end position="223"/>
    </location>
</feature>
<feature type="helix" evidence="2">
    <location>
        <begin position="229"/>
        <end position="249"/>
    </location>
</feature>
<feature type="strand" evidence="2">
    <location>
        <begin position="253"/>
        <end position="255"/>
    </location>
</feature>
<feature type="strand" evidence="2">
    <location>
        <begin position="259"/>
        <end position="268"/>
    </location>
</feature>
<feature type="strand" evidence="2">
    <location>
        <begin position="278"/>
        <end position="286"/>
    </location>
</feature>
<feature type="strand" evidence="2">
    <location>
        <begin position="297"/>
        <end position="300"/>
    </location>
</feature>
<feature type="strand" evidence="2">
    <location>
        <begin position="314"/>
        <end position="317"/>
    </location>
</feature>
<feature type="strand" evidence="2">
    <location>
        <begin position="328"/>
        <end position="332"/>
    </location>
</feature>
<feature type="strand" evidence="2">
    <location>
        <begin position="343"/>
        <end position="346"/>
    </location>
</feature>
<feature type="strand" evidence="2">
    <location>
        <begin position="348"/>
        <end position="355"/>
    </location>
</feature>
<feature type="strand" evidence="2">
    <location>
        <begin position="360"/>
        <end position="364"/>
    </location>
</feature>
<feature type="strand" evidence="2">
    <location>
        <begin position="366"/>
        <end position="372"/>
    </location>
</feature>
<feature type="strand" evidence="2">
    <location>
        <begin position="383"/>
        <end position="385"/>
    </location>
</feature>
<feature type="strand" evidence="2">
    <location>
        <begin position="395"/>
        <end position="397"/>
    </location>
</feature>
<feature type="strand" evidence="2">
    <location>
        <begin position="408"/>
        <end position="415"/>
    </location>
</feature>
<name>GLMU_YERPP</name>
<reference key="1">
    <citation type="submission" date="2007-02" db="EMBL/GenBank/DDBJ databases">
        <title>Complete sequence of chromosome of Yersinia pestis Pestoides F.</title>
        <authorList>
            <consortium name="US DOE Joint Genome Institute"/>
            <person name="Copeland A."/>
            <person name="Lucas S."/>
            <person name="Lapidus A."/>
            <person name="Barry K."/>
            <person name="Detter J.C."/>
            <person name="Glavina del Rio T."/>
            <person name="Hammon N."/>
            <person name="Israni S."/>
            <person name="Dalin E."/>
            <person name="Tice H."/>
            <person name="Pitluck S."/>
            <person name="Di Bartolo G."/>
            <person name="Chain P."/>
            <person name="Malfatti S."/>
            <person name="Shin M."/>
            <person name="Vergez L."/>
            <person name="Schmutz J."/>
            <person name="Larimer F."/>
            <person name="Land M."/>
            <person name="Hauser L."/>
            <person name="Worsham P."/>
            <person name="Chu M."/>
            <person name="Bearden S."/>
            <person name="Garcia E."/>
            <person name="Richardson P."/>
        </authorList>
    </citation>
    <scope>NUCLEOTIDE SEQUENCE [LARGE SCALE GENOMIC DNA]</scope>
    <source>
        <strain>Pestoides F</strain>
    </source>
</reference>
<keyword id="KW-0002">3D-structure</keyword>
<keyword id="KW-0012">Acyltransferase</keyword>
<keyword id="KW-0133">Cell shape</keyword>
<keyword id="KW-0961">Cell wall biogenesis/degradation</keyword>
<keyword id="KW-0963">Cytoplasm</keyword>
<keyword id="KW-0460">Magnesium</keyword>
<keyword id="KW-0479">Metal-binding</keyword>
<keyword id="KW-0511">Multifunctional enzyme</keyword>
<keyword id="KW-0548">Nucleotidyltransferase</keyword>
<keyword id="KW-0573">Peptidoglycan synthesis</keyword>
<keyword id="KW-0677">Repeat</keyword>
<keyword id="KW-0808">Transferase</keyword>
<comment type="function">
    <text evidence="1">Catalyzes the last two sequential reactions in the de novo biosynthetic pathway for UDP-N-acetylglucosamine (UDP-GlcNAc). The C-terminal domain catalyzes the transfer of acetyl group from acetyl coenzyme A to glucosamine-1-phosphate (GlcN-1-P) to produce N-acetylglucosamine-1-phosphate (GlcNAc-1-P), which is converted into UDP-GlcNAc by the transfer of uridine 5-monophosphate (from uridine 5-triphosphate), a reaction catalyzed by the N-terminal domain.</text>
</comment>
<comment type="catalytic activity">
    <reaction evidence="1">
        <text>alpha-D-glucosamine 1-phosphate + acetyl-CoA = N-acetyl-alpha-D-glucosamine 1-phosphate + CoA + H(+)</text>
        <dbReference type="Rhea" id="RHEA:13725"/>
        <dbReference type="ChEBI" id="CHEBI:15378"/>
        <dbReference type="ChEBI" id="CHEBI:57287"/>
        <dbReference type="ChEBI" id="CHEBI:57288"/>
        <dbReference type="ChEBI" id="CHEBI:57776"/>
        <dbReference type="ChEBI" id="CHEBI:58516"/>
        <dbReference type="EC" id="2.3.1.157"/>
    </reaction>
</comment>
<comment type="catalytic activity">
    <reaction evidence="1">
        <text>N-acetyl-alpha-D-glucosamine 1-phosphate + UTP + H(+) = UDP-N-acetyl-alpha-D-glucosamine + diphosphate</text>
        <dbReference type="Rhea" id="RHEA:13509"/>
        <dbReference type="ChEBI" id="CHEBI:15378"/>
        <dbReference type="ChEBI" id="CHEBI:33019"/>
        <dbReference type="ChEBI" id="CHEBI:46398"/>
        <dbReference type="ChEBI" id="CHEBI:57705"/>
        <dbReference type="ChEBI" id="CHEBI:57776"/>
        <dbReference type="EC" id="2.7.7.23"/>
    </reaction>
</comment>
<comment type="cofactor">
    <cofactor evidence="1">
        <name>Mg(2+)</name>
        <dbReference type="ChEBI" id="CHEBI:18420"/>
    </cofactor>
    <text evidence="1">Binds 1 Mg(2+) ion per subunit.</text>
</comment>
<comment type="pathway">
    <text evidence="1">Nucleotide-sugar biosynthesis; UDP-N-acetyl-alpha-D-glucosamine biosynthesis; N-acetyl-alpha-D-glucosamine 1-phosphate from alpha-D-glucosamine 6-phosphate (route II): step 2/2.</text>
</comment>
<comment type="pathway">
    <text evidence="1">Nucleotide-sugar biosynthesis; UDP-N-acetyl-alpha-D-glucosamine biosynthesis; UDP-N-acetyl-alpha-D-glucosamine from N-acetyl-alpha-D-glucosamine 1-phosphate: step 1/1.</text>
</comment>
<comment type="pathway">
    <text evidence="1">Bacterial outer membrane biogenesis; LPS lipid A biosynthesis.</text>
</comment>
<comment type="subunit">
    <text evidence="1">Homotrimer.</text>
</comment>
<comment type="subcellular location">
    <subcellularLocation>
        <location evidence="1">Cytoplasm</location>
    </subcellularLocation>
</comment>
<comment type="similarity">
    <text evidence="1">In the N-terminal section; belongs to the N-acetylglucosamine-1-phosphate uridyltransferase family.</text>
</comment>
<comment type="similarity">
    <text evidence="1">In the C-terminal section; belongs to the transferase hexapeptide repeat family.</text>
</comment>
<sequence length="456" mass="48840">MSNSSMSVVILAAGKGTRMYSDLPKVLHPLAGKPMVQHVIDAAMKLGAQHVHLVYGHGGELLKKTLADPSLNWVLQAEQLGTGHAMQQAAPHFADDEDILMLYGDVPLISVDTLQRLLAAKPEGGIGLLTVKLDNPSGYGRIVRENGDVVGIVEHKDASDAQREINEINTGILVANGRDLKRWLSLLDNNNAQGEFYITDIIALAHADGKKIATVHPTRLSEVEGVNNRLQLSALERVFQTEQAEKLLLAGVMLLDPSRFDLRGELTHGRDITIDTNVIIEGHVILGDRVRIGTGCVLKNCVIGDDSEISPYTVLEDARLDANCTVGPFARLRPGAELAEGAHVGNFVEIKKARLGKGSKAGHLSYLGDAEIGAGVNIGAGTITCNYDGANKFKTIIGDDVFVGSDTQLVAPVTVANGATIGAGTTVTRDVAENELVISRVKQVHIQGWKRPVKKK</sequence>
<dbReference type="EC" id="2.7.7.23" evidence="1"/>
<dbReference type="EC" id="2.3.1.157" evidence="1"/>
<dbReference type="EMBL" id="CP000668">
    <property type="protein sequence ID" value="ABP42257.1"/>
    <property type="molecule type" value="Genomic_DNA"/>
</dbReference>
<dbReference type="RefSeq" id="WP_002215550.1">
    <property type="nucleotide sequence ID" value="NZ_CP009715.1"/>
</dbReference>
<dbReference type="PDB" id="3FWW">
    <property type="method" value="X-ray"/>
    <property type="resolution" value="2.50 A"/>
    <property type="chains" value="A=1-456"/>
</dbReference>
<dbReference type="PDBsum" id="3FWW"/>
<dbReference type="SMR" id="A4TSJ5"/>
<dbReference type="GeneID" id="57974605"/>
<dbReference type="KEGG" id="ypp:YPDSF_3916"/>
<dbReference type="PATRIC" id="fig|386656.14.peg.601"/>
<dbReference type="UniPathway" id="UPA00113">
    <property type="reaction ID" value="UER00532"/>
</dbReference>
<dbReference type="UniPathway" id="UPA00113">
    <property type="reaction ID" value="UER00533"/>
</dbReference>
<dbReference type="UniPathway" id="UPA00973"/>
<dbReference type="EvolutionaryTrace" id="A4TSJ5"/>
<dbReference type="GO" id="GO:0005737">
    <property type="term" value="C:cytoplasm"/>
    <property type="evidence" value="ECO:0007669"/>
    <property type="project" value="UniProtKB-SubCell"/>
</dbReference>
<dbReference type="GO" id="GO:0016020">
    <property type="term" value="C:membrane"/>
    <property type="evidence" value="ECO:0007669"/>
    <property type="project" value="GOC"/>
</dbReference>
<dbReference type="GO" id="GO:0019134">
    <property type="term" value="F:glucosamine-1-phosphate N-acetyltransferase activity"/>
    <property type="evidence" value="ECO:0007669"/>
    <property type="project" value="UniProtKB-UniRule"/>
</dbReference>
<dbReference type="GO" id="GO:0000287">
    <property type="term" value="F:magnesium ion binding"/>
    <property type="evidence" value="ECO:0007669"/>
    <property type="project" value="UniProtKB-UniRule"/>
</dbReference>
<dbReference type="GO" id="GO:0003977">
    <property type="term" value="F:UDP-N-acetylglucosamine diphosphorylase activity"/>
    <property type="evidence" value="ECO:0007669"/>
    <property type="project" value="UniProtKB-UniRule"/>
</dbReference>
<dbReference type="GO" id="GO:0000902">
    <property type="term" value="P:cell morphogenesis"/>
    <property type="evidence" value="ECO:0007669"/>
    <property type="project" value="UniProtKB-UniRule"/>
</dbReference>
<dbReference type="GO" id="GO:0071555">
    <property type="term" value="P:cell wall organization"/>
    <property type="evidence" value="ECO:0007669"/>
    <property type="project" value="UniProtKB-KW"/>
</dbReference>
<dbReference type="GO" id="GO:0009245">
    <property type="term" value="P:lipid A biosynthetic process"/>
    <property type="evidence" value="ECO:0007669"/>
    <property type="project" value="UniProtKB-UniRule"/>
</dbReference>
<dbReference type="GO" id="GO:0009252">
    <property type="term" value="P:peptidoglycan biosynthetic process"/>
    <property type="evidence" value="ECO:0007669"/>
    <property type="project" value="UniProtKB-UniRule"/>
</dbReference>
<dbReference type="GO" id="GO:0008360">
    <property type="term" value="P:regulation of cell shape"/>
    <property type="evidence" value="ECO:0007669"/>
    <property type="project" value="UniProtKB-KW"/>
</dbReference>
<dbReference type="GO" id="GO:0006048">
    <property type="term" value="P:UDP-N-acetylglucosamine biosynthetic process"/>
    <property type="evidence" value="ECO:0007669"/>
    <property type="project" value="UniProtKB-UniPathway"/>
</dbReference>
<dbReference type="CDD" id="cd02540">
    <property type="entry name" value="GT2_GlmU_N_bac"/>
    <property type="match status" value="1"/>
</dbReference>
<dbReference type="CDD" id="cd03353">
    <property type="entry name" value="LbH_GlmU_C"/>
    <property type="match status" value="1"/>
</dbReference>
<dbReference type="FunFam" id="2.160.10.10:FF:000011">
    <property type="entry name" value="Bifunctional protein GlmU"/>
    <property type="match status" value="1"/>
</dbReference>
<dbReference type="FunFam" id="3.90.550.10:FF:000006">
    <property type="entry name" value="Bifunctional protein GlmU"/>
    <property type="match status" value="1"/>
</dbReference>
<dbReference type="Gene3D" id="2.160.10.10">
    <property type="entry name" value="Hexapeptide repeat proteins"/>
    <property type="match status" value="1"/>
</dbReference>
<dbReference type="Gene3D" id="3.90.550.10">
    <property type="entry name" value="Spore Coat Polysaccharide Biosynthesis Protein SpsA, Chain A"/>
    <property type="match status" value="1"/>
</dbReference>
<dbReference type="HAMAP" id="MF_01631">
    <property type="entry name" value="GlmU"/>
    <property type="match status" value="1"/>
</dbReference>
<dbReference type="InterPro" id="IPR005882">
    <property type="entry name" value="Bifunctional_GlmU"/>
</dbReference>
<dbReference type="InterPro" id="IPR050065">
    <property type="entry name" value="GlmU-like"/>
</dbReference>
<dbReference type="InterPro" id="IPR038009">
    <property type="entry name" value="GlmU_C_LbH"/>
</dbReference>
<dbReference type="InterPro" id="IPR001451">
    <property type="entry name" value="Hexapep"/>
</dbReference>
<dbReference type="InterPro" id="IPR018357">
    <property type="entry name" value="Hexapep_transf_CS"/>
</dbReference>
<dbReference type="InterPro" id="IPR025877">
    <property type="entry name" value="MobA-like_NTP_Trfase"/>
</dbReference>
<dbReference type="InterPro" id="IPR029044">
    <property type="entry name" value="Nucleotide-diphossugar_trans"/>
</dbReference>
<dbReference type="InterPro" id="IPR011004">
    <property type="entry name" value="Trimer_LpxA-like_sf"/>
</dbReference>
<dbReference type="NCBIfam" id="TIGR01173">
    <property type="entry name" value="glmU"/>
    <property type="match status" value="1"/>
</dbReference>
<dbReference type="NCBIfam" id="NF006986">
    <property type="entry name" value="PRK09451.1"/>
    <property type="match status" value="1"/>
</dbReference>
<dbReference type="PANTHER" id="PTHR43584:SF3">
    <property type="entry name" value="BIFUNCTIONAL PROTEIN GLMU"/>
    <property type="match status" value="1"/>
</dbReference>
<dbReference type="PANTHER" id="PTHR43584">
    <property type="entry name" value="NUCLEOTIDYL TRANSFERASE"/>
    <property type="match status" value="1"/>
</dbReference>
<dbReference type="Pfam" id="PF00132">
    <property type="entry name" value="Hexapep"/>
    <property type="match status" value="1"/>
</dbReference>
<dbReference type="Pfam" id="PF12804">
    <property type="entry name" value="NTP_transf_3"/>
    <property type="match status" value="1"/>
</dbReference>
<dbReference type="SUPFAM" id="SSF53448">
    <property type="entry name" value="Nucleotide-diphospho-sugar transferases"/>
    <property type="match status" value="1"/>
</dbReference>
<dbReference type="SUPFAM" id="SSF51161">
    <property type="entry name" value="Trimeric LpxA-like enzymes"/>
    <property type="match status" value="1"/>
</dbReference>
<dbReference type="PROSITE" id="PS00101">
    <property type="entry name" value="HEXAPEP_TRANSFERASES"/>
    <property type="match status" value="1"/>
</dbReference>
<organism>
    <name type="scientific">Yersinia pestis (strain Pestoides F)</name>
    <dbReference type="NCBI Taxonomy" id="386656"/>
    <lineage>
        <taxon>Bacteria</taxon>
        <taxon>Pseudomonadati</taxon>
        <taxon>Pseudomonadota</taxon>
        <taxon>Gammaproteobacteria</taxon>
        <taxon>Enterobacterales</taxon>
        <taxon>Yersiniaceae</taxon>
        <taxon>Yersinia</taxon>
    </lineage>
</organism>
<protein>
    <recommendedName>
        <fullName evidence="1">Bifunctional protein GlmU</fullName>
    </recommendedName>
    <domain>
        <recommendedName>
            <fullName evidence="1">UDP-N-acetylglucosamine pyrophosphorylase</fullName>
            <ecNumber evidence="1">2.7.7.23</ecNumber>
        </recommendedName>
        <alternativeName>
            <fullName evidence="1">N-acetylglucosamine-1-phosphate uridyltransferase</fullName>
        </alternativeName>
    </domain>
    <domain>
        <recommendedName>
            <fullName evidence="1">Glucosamine-1-phosphate N-acetyltransferase</fullName>
            <ecNumber evidence="1">2.3.1.157</ecNumber>
        </recommendedName>
    </domain>
</protein>
<gene>
    <name evidence="1" type="primary">glmU</name>
    <name type="ordered locus">YPDSF_3916</name>
</gene>
<evidence type="ECO:0000255" key="1">
    <source>
        <dbReference type="HAMAP-Rule" id="MF_01631"/>
    </source>
</evidence>
<evidence type="ECO:0007829" key="2">
    <source>
        <dbReference type="PDB" id="3FWW"/>
    </source>
</evidence>
<accession>A4TSJ5</accession>